<evidence type="ECO:0000250" key="1"/>
<evidence type="ECO:0000305" key="2"/>
<organism>
    <name type="scientific">Canis lupus familiaris</name>
    <name type="common">Dog</name>
    <name type="synonym">Canis familiaris</name>
    <dbReference type="NCBI Taxonomy" id="9615"/>
    <lineage>
        <taxon>Eukaryota</taxon>
        <taxon>Metazoa</taxon>
        <taxon>Chordata</taxon>
        <taxon>Craniata</taxon>
        <taxon>Vertebrata</taxon>
        <taxon>Euteleostomi</taxon>
        <taxon>Mammalia</taxon>
        <taxon>Eutheria</taxon>
        <taxon>Laurasiatheria</taxon>
        <taxon>Carnivora</taxon>
        <taxon>Caniformia</taxon>
        <taxon>Canidae</taxon>
        <taxon>Canis</taxon>
    </lineage>
</organism>
<feature type="chain" id="PRO_0000051795" description="Cytochrome P450 3A12">
    <location>
        <begin position="1"/>
        <end position="503"/>
    </location>
</feature>
<feature type="binding site" description="axial binding residue" evidence="1">
    <location>
        <position position="442"/>
    </location>
    <ligand>
        <name>heme</name>
        <dbReference type="ChEBI" id="CHEBI:30413"/>
    </ligand>
    <ligandPart>
        <name>Fe</name>
        <dbReference type="ChEBI" id="CHEBI:18248"/>
    </ligandPart>
</feature>
<name>CP3AC_CANLF</name>
<dbReference type="EC" id="1.14.14.1"/>
<dbReference type="EMBL" id="X54915">
    <property type="protein sequence ID" value="CAA38687.1"/>
    <property type="molecule type" value="mRNA"/>
</dbReference>
<dbReference type="PIR" id="S04341">
    <property type="entry name" value="S04341"/>
</dbReference>
<dbReference type="PIR" id="S14275">
    <property type="entry name" value="S14275"/>
</dbReference>
<dbReference type="RefSeq" id="NP_001003340.1">
    <property type="nucleotide sequence ID" value="NM_001003340.1"/>
</dbReference>
<dbReference type="SMR" id="P24463"/>
<dbReference type="FunCoup" id="P24463">
    <property type="interactions" value="53"/>
</dbReference>
<dbReference type="STRING" id="9615.ENSCAFP00000021934"/>
<dbReference type="ChEMBL" id="CHEMBL1907982"/>
<dbReference type="PaxDb" id="9612-ENSCAFP00000022014"/>
<dbReference type="Ensembl" id="ENSCAFT00845042055.1">
    <property type="protein sequence ID" value="ENSCAFP00845032984.1"/>
    <property type="gene ID" value="ENSCAFG00845023773.1"/>
</dbReference>
<dbReference type="GeneID" id="415129"/>
<dbReference type="CTD" id="415129"/>
<dbReference type="VEuPathDB" id="HostDB:ENSCAFG00845023773"/>
<dbReference type="eggNOG" id="KOG0158">
    <property type="taxonomic scope" value="Eukaryota"/>
</dbReference>
<dbReference type="GeneTree" id="ENSGT00950000182958"/>
<dbReference type="InParanoid" id="P24463"/>
<dbReference type="OrthoDB" id="1470350at2759"/>
<dbReference type="Reactome" id="R-CFA-211945">
    <property type="pathway name" value="Phase I - Functionalization of compounds"/>
</dbReference>
<dbReference type="Reactome" id="R-CFA-211958">
    <property type="pathway name" value="Miscellaneous substrates"/>
</dbReference>
<dbReference type="Reactome" id="R-CFA-211981">
    <property type="pathway name" value="Xenobiotics"/>
</dbReference>
<dbReference type="Reactome" id="R-CFA-5423646">
    <property type="pathway name" value="Aflatoxin activation and detoxification"/>
</dbReference>
<dbReference type="Reactome" id="R-CFA-9027307">
    <property type="pathway name" value="Biosynthesis of maresin-like SPMs"/>
</dbReference>
<dbReference type="Reactome" id="R-CFA-9749641">
    <property type="pathway name" value="Aspirin ADME"/>
</dbReference>
<dbReference type="Reactome" id="R-CFA-9754706">
    <property type="pathway name" value="Atorvastatin ADME"/>
</dbReference>
<dbReference type="Reactome" id="R-CFA-9757110">
    <property type="pathway name" value="Prednisone ADME"/>
</dbReference>
<dbReference type="PRO" id="PR:P24463"/>
<dbReference type="Proteomes" id="UP000002254">
    <property type="component" value="Unplaced"/>
</dbReference>
<dbReference type="Proteomes" id="UP000694429">
    <property type="component" value="Unplaced"/>
</dbReference>
<dbReference type="Proteomes" id="UP000694542">
    <property type="component" value="Unplaced"/>
</dbReference>
<dbReference type="Proteomes" id="UP000805418">
    <property type="component" value="Unassembled WGS sequence"/>
</dbReference>
<dbReference type="GO" id="GO:0005789">
    <property type="term" value="C:endoplasmic reticulum membrane"/>
    <property type="evidence" value="ECO:0007669"/>
    <property type="project" value="UniProtKB-SubCell"/>
</dbReference>
<dbReference type="GO" id="GO:0020037">
    <property type="term" value="F:heme binding"/>
    <property type="evidence" value="ECO:0007669"/>
    <property type="project" value="InterPro"/>
</dbReference>
<dbReference type="GO" id="GO:0005506">
    <property type="term" value="F:iron ion binding"/>
    <property type="evidence" value="ECO:0007669"/>
    <property type="project" value="InterPro"/>
</dbReference>
<dbReference type="GO" id="GO:0004497">
    <property type="term" value="F:monooxygenase activity"/>
    <property type="evidence" value="ECO:0000250"/>
    <property type="project" value="UniProtKB"/>
</dbReference>
<dbReference type="GO" id="GO:0016712">
    <property type="term" value="F:oxidoreductase activity, acting on paired donors, with incorporation or reduction of molecular oxygen, reduced flavin or flavoprotein as one donor, and incorporation of one atom of oxygen"/>
    <property type="evidence" value="ECO:0007669"/>
    <property type="project" value="UniProtKB-EC"/>
</dbReference>
<dbReference type="GO" id="GO:0008395">
    <property type="term" value="F:steroid hydroxylase activity"/>
    <property type="evidence" value="ECO:0000314"/>
    <property type="project" value="AgBase"/>
</dbReference>
<dbReference type="GO" id="GO:0050649">
    <property type="term" value="F:testosterone 6-beta-hydroxylase activity"/>
    <property type="evidence" value="ECO:0000314"/>
    <property type="project" value="AgBase"/>
</dbReference>
<dbReference type="GO" id="GO:0042445">
    <property type="term" value="P:hormone metabolic process"/>
    <property type="evidence" value="ECO:0000314"/>
    <property type="project" value="AgBase"/>
</dbReference>
<dbReference type="GO" id="GO:0070989">
    <property type="term" value="P:oxidative demethylation"/>
    <property type="evidence" value="ECO:0000318"/>
    <property type="project" value="GO_Central"/>
</dbReference>
<dbReference type="GO" id="GO:0042448">
    <property type="term" value="P:progesterone metabolic process"/>
    <property type="evidence" value="ECO:0000314"/>
    <property type="project" value="AgBase"/>
</dbReference>
<dbReference type="GO" id="GO:0008202">
    <property type="term" value="P:steroid metabolic process"/>
    <property type="evidence" value="ECO:0000314"/>
    <property type="project" value="AgBase"/>
</dbReference>
<dbReference type="CDD" id="cd20650">
    <property type="entry name" value="CYP3A"/>
    <property type="match status" value="1"/>
</dbReference>
<dbReference type="FunFam" id="1.10.630.10:FF:000096">
    <property type="entry name" value="Cytochrome P450 3A4"/>
    <property type="match status" value="1"/>
</dbReference>
<dbReference type="Gene3D" id="1.10.630.10">
    <property type="entry name" value="Cytochrome P450"/>
    <property type="match status" value="1"/>
</dbReference>
<dbReference type="InterPro" id="IPR001128">
    <property type="entry name" value="Cyt_P450"/>
</dbReference>
<dbReference type="InterPro" id="IPR017972">
    <property type="entry name" value="Cyt_P450_CS"/>
</dbReference>
<dbReference type="InterPro" id="IPR008072">
    <property type="entry name" value="Cyt_P450_E_CYP3A"/>
</dbReference>
<dbReference type="InterPro" id="IPR002402">
    <property type="entry name" value="Cyt_P450_E_grp-II"/>
</dbReference>
<dbReference type="InterPro" id="IPR036396">
    <property type="entry name" value="Cyt_P450_sf"/>
</dbReference>
<dbReference type="InterPro" id="IPR050705">
    <property type="entry name" value="Cytochrome_P450_3A"/>
</dbReference>
<dbReference type="PANTHER" id="PTHR24302:SF38">
    <property type="entry name" value="CYTOCHROME P450 3A5"/>
    <property type="match status" value="1"/>
</dbReference>
<dbReference type="PANTHER" id="PTHR24302">
    <property type="entry name" value="CYTOCHROME P450 FAMILY 3"/>
    <property type="match status" value="1"/>
</dbReference>
<dbReference type="Pfam" id="PF00067">
    <property type="entry name" value="p450"/>
    <property type="match status" value="1"/>
</dbReference>
<dbReference type="PRINTS" id="PR00464">
    <property type="entry name" value="EP450II"/>
</dbReference>
<dbReference type="PRINTS" id="PR01689">
    <property type="entry name" value="EP450IICYP3A"/>
</dbReference>
<dbReference type="PRINTS" id="PR00385">
    <property type="entry name" value="P450"/>
</dbReference>
<dbReference type="SUPFAM" id="SSF48264">
    <property type="entry name" value="Cytochrome P450"/>
    <property type="match status" value="1"/>
</dbReference>
<dbReference type="PROSITE" id="PS00086">
    <property type="entry name" value="CYTOCHROME_P450"/>
    <property type="match status" value="1"/>
</dbReference>
<comment type="function">
    <text>Cytochromes P450 are a group of heme-thiolate monooxygenases. In liver microsomes, this enzyme is involved in an NADPH-dependent electron transport pathway. It oxidizes a variety of structurally unrelated compounds, including steroids, fatty acids, and xenobiotics.</text>
</comment>
<comment type="catalytic activity">
    <reaction>
        <text>an organic molecule + reduced [NADPH--hemoprotein reductase] + O2 = an alcohol + oxidized [NADPH--hemoprotein reductase] + H2O + H(+)</text>
        <dbReference type="Rhea" id="RHEA:17149"/>
        <dbReference type="Rhea" id="RHEA-COMP:11964"/>
        <dbReference type="Rhea" id="RHEA-COMP:11965"/>
        <dbReference type="ChEBI" id="CHEBI:15377"/>
        <dbReference type="ChEBI" id="CHEBI:15378"/>
        <dbReference type="ChEBI" id="CHEBI:15379"/>
        <dbReference type="ChEBI" id="CHEBI:30879"/>
        <dbReference type="ChEBI" id="CHEBI:57618"/>
        <dbReference type="ChEBI" id="CHEBI:58210"/>
        <dbReference type="ChEBI" id="CHEBI:142491"/>
        <dbReference type="EC" id="1.14.14.1"/>
    </reaction>
</comment>
<comment type="cofactor">
    <cofactor evidence="1">
        <name>heme</name>
        <dbReference type="ChEBI" id="CHEBI:30413"/>
    </cofactor>
</comment>
<comment type="subcellular location">
    <subcellularLocation>
        <location>Endoplasmic reticulum membrane</location>
        <topology>Peripheral membrane protein</topology>
    </subcellularLocation>
    <subcellularLocation>
        <location>Microsome membrane</location>
        <topology>Peripheral membrane protein</topology>
    </subcellularLocation>
</comment>
<comment type="induction">
    <text>P450 can be induced to high levels in liver and other tissues by various foreign compounds, including drugs, pesticides, and carcinogens.</text>
</comment>
<comment type="similarity">
    <text evidence="2">Belongs to the cytochrome P450 family.</text>
</comment>
<protein>
    <recommendedName>
        <fullName>Cytochrome P450 3A12</fullName>
        <ecNumber>1.14.14.1</ecNumber>
    </recommendedName>
    <alternativeName>
        <fullName>CYPIIIA12</fullName>
    </alternativeName>
    <alternativeName>
        <fullName>Cytochrome P450-PBD-1</fullName>
    </alternativeName>
</protein>
<accession>P24463</accession>
<gene>
    <name type="primary">CYP3A12</name>
</gene>
<sequence>MDLIPSFSTETWLLLAISLVLLYLYGTYTHGIFRKLGIPGPTPLPFVGTALGYRNGFYVFDMKCFSKYGRMWGFYDGRQPVLAITDPDMIKTVLVKECYSVFTNRRTLGPVGFMKSAISLSEDEEWKRMRTLLSPTFTTGKLKEMFPIIGQYGDVLVNNLRKEAEKGKAINLKDVFGAYSMDVITSTSFGVNIDSLNHPQDPFVENTKKLLKFDFLDPFFFSILLFPFLTPVFEILNIWLFPKKVTDFFRKSVERMKESRLKDKQKHRVDFLQLMINSQNSKEMDTHKALSDLELVAQSIIFIFAGYETTSTSLSFLMYELATHPDVQQKLQEEIDATFPNKALPTYDALVQMEYLDMVLNETLRLYPIAGRLERVCKKDVEISGVFIPKGTVVMVPTFTLHRDQSLWPEPEEFRPERFSRKNKDSINPYTYLPFGTGPRNCIGMRFAIMNMKLALVRVLQNFSFKPCKETQIPLKLNAQGIIQPEKPIVLKVEPRDGSVNGA</sequence>
<reference key="1">
    <citation type="journal article" date="1991" name="Biochim. Biophys. Acta">
        <title>cDNA and deduced amino acid sequences of a dog liver cytochrome P-450 of the IIIA gene subfamily.</title>
        <authorList>
            <person name="Ciaccio P.J."/>
            <person name="Graves P.E."/>
            <person name="Bourque D.P."/>
            <person name="Glinsmann-Gibson B."/>
            <person name="Halpert J.R."/>
        </authorList>
    </citation>
    <scope>NUCLEOTIDE SEQUENCE [MRNA]</scope>
    <source>
        <strain>Beagle</strain>
        <tissue>Liver</tissue>
    </source>
</reference>
<proteinExistence type="evidence at transcript level"/>
<keyword id="KW-0256">Endoplasmic reticulum</keyword>
<keyword id="KW-0349">Heme</keyword>
<keyword id="KW-0408">Iron</keyword>
<keyword id="KW-0472">Membrane</keyword>
<keyword id="KW-0479">Metal-binding</keyword>
<keyword id="KW-0492">Microsome</keyword>
<keyword id="KW-0503">Monooxygenase</keyword>
<keyword id="KW-0560">Oxidoreductase</keyword>
<keyword id="KW-1185">Reference proteome</keyword>